<organism>
    <name type="scientific">Frankia casuarinae (strain DSM 45818 / CECT 9043 / HFP020203 / CcI3)</name>
    <dbReference type="NCBI Taxonomy" id="106370"/>
    <lineage>
        <taxon>Bacteria</taxon>
        <taxon>Bacillati</taxon>
        <taxon>Actinomycetota</taxon>
        <taxon>Actinomycetes</taxon>
        <taxon>Frankiales</taxon>
        <taxon>Frankiaceae</taxon>
        <taxon>Frankia</taxon>
    </lineage>
</organism>
<sequence length="134" mass="14324">MPPKTRAAGAKKVRRKEKKNVAHGHAHIKSTFNNTIVSITDPSGNVISWASAGHVGFKGSRKSTPFAAQMAAENAARKAQEHGMRKVDVFVKGPGSGRETAIRSLQAAGLEVGAIQDVTPTPHNGCRPPKRRRV</sequence>
<protein>
    <recommendedName>
        <fullName evidence="1">Small ribosomal subunit protein uS11</fullName>
    </recommendedName>
    <alternativeName>
        <fullName evidence="2">30S ribosomal protein S11</fullName>
    </alternativeName>
</protein>
<gene>
    <name evidence="1" type="primary">rpsK</name>
    <name type="ordered locus">Francci3_0608</name>
</gene>
<accession>Q2JFF0</accession>
<comment type="function">
    <text evidence="1">Located on the platform of the 30S subunit, it bridges several disparate RNA helices of the 16S rRNA. Forms part of the Shine-Dalgarno cleft in the 70S ribosome.</text>
</comment>
<comment type="subunit">
    <text evidence="1">Part of the 30S ribosomal subunit. Interacts with proteins S7 and S18. Binds to IF-3.</text>
</comment>
<comment type="similarity">
    <text evidence="1">Belongs to the universal ribosomal protein uS11 family.</text>
</comment>
<evidence type="ECO:0000255" key="1">
    <source>
        <dbReference type="HAMAP-Rule" id="MF_01310"/>
    </source>
</evidence>
<evidence type="ECO:0000305" key="2"/>
<reference key="1">
    <citation type="journal article" date="2007" name="Genome Res.">
        <title>Genome characteristics of facultatively symbiotic Frankia sp. strains reflect host range and host plant biogeography.</title>
        <authorList>
            <person name="Normand P."/>
            <person name="Lapierre P."/>
            <person name="Tisa L.S."/>
            <person name="Gogarten J.P."/>
            <person name="Alloisio N."/>
            <person name="Bagnarol E."/>
            <person name="Bassi C.A."/>
            <person name="Berry A.M."/>
            <person name="Bickhart D.M."/>
            <person name="Choisne N."/>
            <person name="Couloux A."/>
            <person name="Cournoyer B."/>
            <person name="Cruveiller S."/>
            <person name="Daubin V."/>
            <person name="Demange N."/>
            <person name="Francino M.P."/>
            <person name="Goltsman E."/>
            <person name="Huang Y."/>
            <person name="Kopp O.R."/>
            <person name="Labarre L."/>
            <person name="Lapidus A."/>
            <person name="Lavire C."/>
            <person name="Marechal J."/>
            <person name="Martinez M."/>
            <person name="Mastronunzio J.E."/>
            <person name="Mullin B.C."/>
            <person name="Niemann J."/>
            <person name="Pujic P."/>
            <person name="Rawnsley T."/>
            <person name="Rouy Z."/>
            <person name="Schenowitz C."/>
            <person name="Sellstedt A."/>
            <person name="Tavares F."/>
            <person name="Tomkins J.P."/>
            <person name="Vallenet D."/>
            <person name="Valverde C."/>
            <person name="Wall L.G."/>
            <person name="Wang Y."/>
            <person name="Medigue C."/>
            <person name="Benson D.R."/>
        </authorList>
    </citation>
    <scope>NUCLEOTIDE SEQUENCE [LARGE SCALE GENOMIC DNA]</scope>
    <source>
        <strain>DSM 45818 / CECT 9043 / HFP020203 / CcI3</strain>
    </source>
</reference>
<name>RS11_FRACC</name>
<keyword id="KW-1185">Reference proteome</keyword>
<keyword id="KW-0687">Ribonucleoprotein</keyword>
<keyword id="KW-0689">Ribosomal protein</keyword>
<keyword id="KW-0694">RNA-binding</keyword>
<keyword id="KW-0699">rRNA-binding</keyword>
<proteinExistence type="inferred from homology"/>
<feature type="chain" id="PRO_0000294762" description="Small ribosomal subunit protein uS11">
    <location>
        <begin position="1"/>
        <end position="134"/>
    </location>
</feature>
<dbReference type="EMBL" id="CP000249">
    <property type="protein sequence ID" value="ABD09992.1"/>
    <property type="molecule type" value="Genomic_DNA"/>
</dbReference>
<dbReference type="RefSeq" id="WP_011435061.1">
    <property type="nucleotide sequence ID" value="NZ_LRTJ01000013.1"/>
</dbReference>
<dbReference type="SMR" id="Q2JFF0"/>
<dbReference type="STRING" id="106370.Francci3_0608"/>
<dbReference type="KEGG" id="fra:Francci3_0608"/>
<dbReference type="eggNOG" id="COG0100">
    <property type="taxonomic scope" value="Bacteria"/>
</dbReference>
<dbReference type="HOGENOM" id="CLU_072439_5_0_11"/>
<dbReference type="OrthoDB" id="9806415at2"/>
<dbReference type="PhylomeDB" id="Q2JFF0"/>
<dbReference type="Proteomes" id="UP000001937">
    <property type="component" value="Chromosome"/>
</dbReference>
<dbReference type="GO" id="GO:1990904">
    <property type="term" value="C:ribonucleoprotein complex"/>
    <property type="evidence" value="ECO:0007669"/>
    <property type="project" value="UniProtKB-KW"/>
</dbReference>
<dbReference type="GO" id="GO:0005840">
    <property type="term" value="C:ribosome"/>
    <property type="evidence" value="ECO:0007669"/>
    <property type="project" value="UniProtKB-KW"/>
</dbReference>
<dbReference type="GO" id="GO:0019843">
    <property type="term" value="F:rRNA binding"/>
    <property type="evidence" value="ECO:0007669"/>
    <property type="project" value="UniProtKB-UniRule"/>
</dbReference>
<dbReference type="GO" id="GO:0003735">
    <property type="term" value="F:structural constituent of ribosome"/>
    <property type="evidence" value="ECO:0007669"/>
    <property type="project" value="InterPro"/>
</dbReference>
<dbReference type="GO" id="GO:0006412">
    <property type="term" value="P:translation"/>
    <property type="evidence" value="ECO:0007669"/>
    <property type="project" value="UniProtKB-UniRule"/>
</dbReference>
<dbReference type="FunFam" id="3.30.420.80:FF:000001">
    <property type="entry name" value="30S ribosomal protein S11"/>
    <property type="match status" value="1"/>
</dbReference>
<dbReference type="Gene3D" id="3.30.420.80">
    <property type="entry name" value="Ribosomal protein S11"/>
    <property type="match status" value="1"/>
</dbReference>
<dbReference type="HAMAP" id="MF_01310">
    <property type="entry name" value="Ribosomal_uS11"/>
    <property type="match status" value="1"/>
</dbReference>
<dbReference type="InterPro" id="IPR001971">
    <property type="entry name" value="Ribosomal_uS11"/>
</dbReference>
<dbReference type="InterPro" id="IPR019981">
    <property type="entry name" value="Ribosomal_uS11_bac-type"/>
</dbReference>
<dbReference type="InterPro" id="IPR018102">
    <property type="entry name" value="Ribosomal_uS11_CS"/>
</dbReference>
<dbReference type="InterPro" id="IPR036967">
    <property type="entry name" value="Ribosomal_uS11_sf"/>
</dbReference>
<dbReference type="NCBIfam" id="NF003698">
    <property type="entry name" value="PRK05309.1"/>
    <property type="match status" value="1"/>
</dbReference>
<dbReference type="NCBIfam" id="TIGR03632">
    <property type="entry name" value="uS11_bact"/>
    <property type="match status" value="1"/>
</dbReference>
<dbReference type="PANTHER" id="PTHR11759">
    <property type="entry name" value="40S RIBOSOMAL PROTEIN S14/30S RIBOSOMAL PROTEIN S11"/>
    <property type="match status" value="1"/>
</dbReference>
<dbReference type="Pfam" id="PF00411">
    <property type="entry name" value="Ribosomal_S11"/>
    <property type="match status" value="1"/>
</dbReference>
<dbReference type="PIRSF" id="PIRSF002131">
    <property type="entry name" value="Ribosomal_S11"/>
    <property type="match status" value="1"/>
</dbReference>
<dbReference type="SUPFAM" id="SSF53137">
    <property type="entry name" value="Translational machinery components"/>
    <property type="match status" value="1"/>
</dbReference>
<dbReference type="PROSITE" id="PS00054">
    <property type="entry name" value="RIBOSOMAL_S11"/>
    <property type="match status" value="1"/>
</dbReference>